<dbReference type="EC" id="7.6.2.-" evidence="1"/>
<dbReference type="EMBL" id="BX950851">
    <property type="protein sequence ID" value="CAG74746.1"/>
    <property type="molecule type" value="Genomic_DNA"/>
</dbReference>
<dbReference type="RefSeq" id="WP_011093414.1">
    <property type="nucleotide sequence ID" value="NC_004547.2"/>
</dbReference>
<dbReference type="SMR" id="Q6D645"/>
<dbReference type="STRING" id="218491.ECA1843"/>
<dbReference type="KEGG" id="eca:ECA1843"/>
<dbReference type="PATRIC" id="fig|218491.5.peg.1872"/>
<dbReference type="eggNOG" id="COG4559">
    <property type="taxonomic scope" value="Bacteria"/>
</dbReference>
<dbReference type="HOGENOM" id="CLU_000604_1_11_6"/>
<dbReference type="OrthoDB" id="5292475at2"/>
<dbReference type="Proteomes" id="UP000007966">
    <property type="component" value="Chromosome"/>
</dbReference>
<dbReference type="GO" id="GO:0005886">
    <property type="term" value="C:plasma membrane"/>
    <property type="evidence" value="ECO:0007669"/>
    <property type="project" value="UniProtKB-SubCell"/>
</dbReference>
<dbReference type="GO" id="GO:0005524">
    <property type="term" value="F:ATP binding"/>
    <property type="evidence" value="ECO:0007669"/>
    <property type="project" value="UniProtKB-KW"/>
</dbReference>
<dbReference type="GO" id="GO:0016887">
    <property type="term" value="F:ATP hydrolysis activity"/>
    <property type="evidence" value="ECO:0007669"/>
    <property type="project" value="InterPro"/>
</dbReference>
<dbReference type="CDD" id="cd03214">
    <property type="entry name" value="ABC_Iron-Siderophores_B12_Hemin"/>
    <property type="match status" value="1"/>
</dbReference>
<dbReference type="FunFam" id="3.40.50.300:FF:000134">
    <property type="entry name" value="Iron-enterobactin ABC transporter ATP-binding protein"/>
    <property type="match status" value="1"/>
</dbReference>
<dbReference type="Gene3D" id="3.40.50.300">
    <property type="entry name" value="P-loop containing nucleotide triphosphate hydrolases"/>
    <property type="match status" value="1"/>
</dbReference>
<dbReference type="InterPro" id="IPR003593">
    <property type="entry name" value="AAA+_ATPase"/>
</dbReference>
<dbReference type="InterPro" id="IPR003439">
    <property type="entry name" value="ABC_transporter-like_ATP-bd"/>
</dbReference>
<dbReference type="InterPro" id="IPR017871">
    <property type="entry name" value="ABC_transporter-like_CS"/>
</dbReference>
<dbReference type="InterPro" id="IPR027417">
    <property type="entry name" value="P-loop_NTPase"/>
</dbReference>
<dbReference type="NCBIfam" id="NF010068">
    <property type="entry name" value="PRK13548.1"/>
    <property type="match status" value="1"/>
</dbReference>
<dbReference type="PANTHER" id="PTHR42794">
    <property type="entry name" value="HEMIN IMPORT ATP-BINDING PROTEIN HMUV"/>
    <property type="match status" value="1"/>
</dbReference>
<dbReference type="PANTHER" id="PTHR42794:SF1">
    <property type="entry name" value="HEMIN IMPORT ATP-BINDING PROTEIN HMUV"/>
    <property type="match status" value="1"/>
</dbReference>
<dbReference type="Pfam" id="PF00005">
    <property type="entry name" value="ABC_tran"/>
    <property type="match status" value="1"/>
</dbReference>
<dbReference type="SMART" id="SM00382">
    <property type="entry name" value="AAA"/>
    <property type="match status" value="1"/>
</dbReference>
<dbReference type="SUPFAM" id="SSF52540">
    <property type="entry name" value="P-loop containing nucleoside triphosphate hydrolases"/>
    <property type="match status" value="1"/>
</dbReference>
<dbReference type="PROSITE" id="PS00211">
    <property type="entry name" value="ABC_TRANSPORTER_1"/>
    <property type="match status" value="1"/>
</dbReference>
<dbReference type="PROSITE" id="PS50893">
    <property type="entry name" value="ABC_TRANSPORTER_2"/>
    <property type="match status" value="1"/>
</dbReference>
<dbReference type="PROSITE" id="PS51261">
    <property type="entry name" value="HMUV"/>
    <property type="match status" value="1"/>
</dbReference>
<keyword id="KW-0067">ATP-binding</keyword>
<keyword id="KW-0997">Cell inner membrane</keyword>
<keyword id="KW-1003">Cell membrane</keyword>
<keyword id="KW-0472">Membrane</keyword>
<keyword id="KW-0547">Nucleotide-binding</keyword>
<keyword id="KW-1185">Reference proteome</keyword>
<keyword id="KW-1278">Translocase</keyword>
<keyword id="KW-0813">Transport</keyword>
<evidence type="ECO:0000255" key="1">
    <source>
        <dbReference type="HAMAP-Rule" id="MF_01718"/>
    </source>
</evidence>
<protein>
    <recommendedName>
        <fullName evidence="1">Hemin import ATP-binding protein HmuV</fullName>
        <ecNumber evidence="1">7.6.2.-</ecNumber>
    </recommendedName>
</protein>
<reference key="1">
    <citation type="journal article" date="2004" name="Proc. Natl. Acad. Sci. U.S.A.">
        <title>Genome sequence of the enterobacterial phytopathogen Erwinia carotovora subsp. atroseptica and characterization of virulence factors.</title>
        <authorList>
            <person name="Bell K.S."/>
            <person name="Sebaihia M."/>
            <person name="Pritchard L."/>
            <person name="Holden M.T.G."/>
            <person name="Hyman L.J."/>
            <person name="Holeva M.C."/>
            <person name="Thomson N.R."/>
            <person name="Bentley S.D."/>
            <person name="Churcher L.J.C."/>
            <person name="Mungall K."/>
            <person name="Atkin R."/>
            <person name="Bason N."/>
            <person name="Brooks K."/>
            <person name="Chillingworth T."/>
            <person name="Clark K."/>
            <person name="Doggett J."/>
            <person name="Fraser A."/>
            <person name="Hance Z."/>
            <person name="Hauser H."/>
            <person name="Jagels K."/>
            <person name="Moule S."/>
            <person name="Norbertczak H."/>
            <person name="Ormond D."/>
            <person name="Price C."/>
            <person name="Quail M.A."/>
            <person name="Sanders M."/>
            <person name="Walker D."/>
            <person name="Whitehead S."/>
            <person name="Salmond G.P.C."/>
            <person name="Birch P.R.J."/>
            <person name="Parkhill J."/>
            <person name="Toth I.K."/>
        </authorList>
    </citation>
    <scope>NUCLEOTIDE SEQUENCE [LARGE SCALE GENOMIC DNA]</scope>
    <source>
        <strain>SCRI 1043 / ATCC BAA-672</strain>
    </source>
</reference>
<gene>
    <name evidence="1" type="primary">hmuV</name>
    <name type="ordered locus">ECA1843</name>
</gene>
<proteinExistence type="inferred from homology"/>
<accession>Q6D645</accession>
<comment type="function">
    <text evidence="1">Part of the ABC transporter complex HmuTUV involved in hemin import. Responsible for energy coupling to the transport system.</text>
</comment>
<comment type="subunit">
    <text evidence="1">The complex is composed of two ATP-binding proteins (HmuV), two transmembrane proteins (HmuU) and a solute-binding protein (HmuT).</text>
</comment>
<comment type="subcellular location">
    <subcellularLocation>
        <location evidence="1">Cell inner membrane</location>
        <topology evidence="1">Peripheral membrane protein</topology>
    </subcellularLocation>
</comment>
<comment type="similarity">
    <text evidence="1">Belongs to the ABC transporter superfamily. Heme (hemin) importer (TC 3.A.1.14.5) family.</text>
</comment>
<name>HMUV_PECAS</name>
<sequence>MTDSALDRTLVARHLRFQTNGRYLTDDVSLELNCGEIVAIIGPNGAGKSTLLRLLTGYLTPDDGECLLAGQPFSHWQPSALAKTRAVMRQHSGMAFAFSVQDVVAMGRSPHGRYPKNDDVVQQVMAQTGCLELATRDYRHLSGGEQQRVQLARVLAQLWHPEPTPGWLFLDEPTSALDLYHQQHLLRLLKQLTREQPLAVCCVLHDLNLAALYADRILLLHEGKLVAQGSPADVLQAETLAHWYRADLSVGSHPDYAIPQVYLRQ</sequence>
<feature type="chain" id="PRO_0000269594" description="Hemin import ATP-binding protein HmuV">
    <location>
        <begin position="1"/>
        <end position="265"/>
    </location>
</feature>
<feature type="domain" description="ABC transporter" evidence="1">
    <location>
        <begin position="10"/>
        <end position="247"/>
    </location>
</feature>
<feature type="binding site" evidence="1">
    <location>
        <begin position="42"/>
        <end position="49"/>
    </location>
    <ligand>
        <name>ATP</name>
        <dbReference type="ChEBI" id="CHEBI:30616"/>
    </ligand>
</feature>
<organism>
    <name type="scientific">Pectobacterium atrosepticum (strain SCRI 1043 / ATCC BAA-672)</name>
    <name type="common">Erwinia carotovora subsp. atroseptica</name>
    <dbReference type="NCBI Taxonomy" id="218491"/>
    <lineage>
        <taxon>Bacteria</taxon>
        <taxon>Pseudomonadati</taxon>
        <taxon>Pseudomonadota</taxon>
        <taxon>Gammaproteobacteria</taxon>
        <taxon>Enterobacterales</taxon>
        <taxon>Pectobacteriaceae</taxon>
        <taxon>Pectobacterium</taxon>
    </lineage>
</organism>